<dbReference type="EC" id="2.4.1.15" evidence="4"/>
<dbReference type="EMBL" id="J04450">
    <property type="protein sequence ID" value="AAA66891.1"/>
    <property type="status" value="ALT_FRAME"/>
    <property type="molecule type" value="Genomic_DNA"/>
</dbReference>
<dbReference type="EMBL" id="X68214">
    <property type="protein sequence ID" value="CAA48296.1"/>
    <property type="molecule type" value="mRNA"/>
</dbReference>
<dbReference type="EMBL" id="X68496">
    <property type="protein sequence ID" value="CAA48510.1"/>
    <property type="molecule type" value="Genomic_DNA"/>
</dbReference>
<dbReference type="EMBL" id="X67499">
    <property type="protein sequence ID" value="CAA47834.1"/>
    <property type="molecule type" value="Genomic_DNA"/>
</dbReference>
<dbReference type="EMBL" id="X61275">
    <property type="protein sequence ID" value="CAA43580.1"/>
    <property type="molecule type" value="Genomic_DNA"/>
</dbReference>
<dbReference type="EMBL" id="L21999">
    <property type="protein sequence ID" value="AAA53672.1"/>
    <property type="molecule type" value="Genomic_DNA"/>
</dbReference>
<dbReference type="EMBL" id="X78993">
    <property type="protein sequence ID" value="CAA55627.1"/>
    <property type="status" value="ALT_SEQ"/>
    <property type="molecule type" value="Genomic_DNA"/>
</dbReference>
<dbReference type="EMBL" id="X75891">
    <property type="protein sequence ID" value="CAA53485.1"/>
    <property type="molecule type" value="Genomic_DNA"/>
</dbReference>
<dbReference type="EMBL" id="AF061037">
    <property type="protein sequence ID" value="AAC16974.1"/>
    <property type="molecule type" value="mRNA"/>
</dbReference>
<dbReference type="EMBL" id="AY598966">
    <property type="protein sequence ID" value="AAT27376.1"/>
    <property type="molecule type" value="Genomic_DNA"/>
</dbReference>
<dbReference type="EMBL" id="AY598964">
    <property type="protein sequence ID" value="AAT27374.1"/>
    <property type="molecule type" value="Genomic_DNA"/>
</dbReference>
<dbReference type="EMBL" id="Z35995">
    <property type="protein sequence ID" value="CAA85083.1"/>
    <property type="molecule type" value="Genomic_DNA"/>
</dbReference>
<dbReference type="EMBL" id="AY693147">
    <property type="protein sequence ID" value="AAT93166.1"/>
    <property type="molecule type" value="Genomic_DNA"/>
</dbReference>
<dbReference type="EMBL" id="BK006936">
    <property type="protein sequence ID" value="DAA07243.1"/>
    <property type="molecule type" value="Genomic_DNA"/>
</dbReference>
<dbReference type="PIR" id="S34979">
    <property type="entry name" value="S34979"/>
</dbReference>
<dbReference type="RefSeq" id="NP_009684.1">
    <property type="nucleotide sequence ID" value="NM_001178474.1"/>
</dbReference>
<dbReference type="SMR" id="Q00764"/>
<dbReference type="BioGRID" id="32827">
    <property type="interactions" value="525"/>
</dbReference>
<dbReference type="ComplexPortal" id="CPX-582">
    <property type="entry name" value="Trehalose-6-phosphate synthase/phosphatase complex, tps3 variant"/>
</dbReference>
<dbReference type="ComplexPortal" id="CPX-583">
    <property type="entry name" value="Trehalose-6-phosphate synthase/phosphatase complex, tsl1 variant"/>
</dbReference>
<dbReference type="DIP" id="DIP-744N"/>
<dbReference type="FunCoup" id="Q00764">
    <property type="interactions" value="813"/>
</dbReference>
<dbReference type="IntAct" id="Q00764">
    <property type="interactions" value="43"/>
</dbReference>
<dbReference type="MINT" id="Q00764"/>
<dbReference type="STRING" id="4932.YBR126C"/>
<dbReference type="CAZy" id="GT20">
    <property type="family name" value="Glycosyltransferase Family 20"/>
</dbReference>
<dbReference type="CarbonylDB" id="Q00764"/>
<dbReference type="iPTMnet" id="Q00764"/>
<dbReference type="PaxDb" id="4932-YBR126C"/>
<dbReference type="PeptideAtlas" id="Q00764"/>
<dbReference type="TopDownProteomics" id="Q00764"/>
<dbReference type="EnsemblFungi" id="YBR126C_mRNA">
    <property type="protein sequence ID" value="YBR126C"/>
    <property type="gene ID" value="YBR126C"/>
</dbReference>
<dbReference type="GeneID" id="852423"/>
<dbReference type="KEGG" id="sce:YBR126C"/>
<dbReference type="AGR" id="SGD:S000000330"/>
<dbReference type="SGD" id="S000000330">
    <property type="gene designation" value="TPS1"/>
</dbReference>
<dbReference type="VEuPathDB" id="FungiDB:YBR126C"/>
<dbReference type="eggNOG" id="KOG1050">
    <property type="taxonomic scope" value="Eukaryota"/>
</dbReference>
<dbReference type="GeneTree" id="ENSGT00940000167933"/>
<dbReference type="HOGENOM" id="CLU_002351_7_2_1"/>
<dbReference type="InParanoid" id="Q00764"/>
<dbReference type="OMA" id="NRTIWPL"/>
<dbReference type="OrthoDB" id="755951at2759"/>
<dbReference type="BioCyc" id="MetaCyc:YBR126C-MONOMER"/>
<dbReference type="BioCyc" id="YEAST:YBR126C-MONOMER"/>
<dbReference type="BRENDA" id="2.4.1.15">
    <property type="organism ID" value="984"/>
</dbReference>
<dbReference type="SABIO-RK" id="Q00764"/>
<dbReference type="BioGRID-ORCS" id="852423">
    <property type="hits" value="8 hits in 10 CRISPR screens"/>
</dbReference>
<dbReference type="CD-CODE" id="67785C55">
    <property type="entry name" value="Hypersomatic shock foci"/>
</dbReference>
<dbReference type="PRO" id="PR:Q00764"/>
<dbReference type="Proteomes" id="UP000002311">
    <property type="component" value="Chromosome II"/>
</dbReference>
<dbReference type="RNAct" id="Q00764">
    <property type="molecule type" value="protein"/>
</dbReference>
<dbReference type="GO" id="GO:0005946">
    <property type="term" value="C:alpha,alpha-trehalose-phosphate synthase complex (UDP-forming)"/>
    <property type="evidence" value="ECO:0000314"/>
    <property type="project" value="SGD"/>
</dbReference>
<dbReference type="GO" id="GO:0005737">
    <property type="term" value="C:cytoplasm"/>
    <property type="evidence" value="ECO:0007005"/>
    <property type="project" value="SGD"/>
</dbReference>
<dbReference type="GO" id="GO:0003825">
    <property type="term" value="F:alpha,alpha-trehalose-phosphate synthase (UDP-forming) activity"/>
    <property type="evidence" value="ECO:0000315"/>
    <property type="project" value="SGD"/>
</dbReference>
<dbReference type="GO" id="GO:0004805">
    <property type="term" value="F:trehalose-phosphatase activity"/>
    <property type="evidence" value="ECO:0000315"/>
    <property type="project" value="SGD"/>
</dbReference>
<dbReference type="GO" id="GO:0005975">
    <property type="term" value="P:carbohydrate metabolic process"/>
    <property type="evidence" value="ECO:0000314"/>
    <property type="project" value="SGD"/>
</dbReference>
<dbReference type="GO" id="GO:0071465">
    <property type="term" value="P:cellular response to desiccation"/>
    <property type="evidence" value="ECO:0000315"/>
    <property type="project" value="SGD"/>
</dbReference>
<dbReference type="GO" id="GO:0034605">
    <property type="term" value="P:cellular response to heat"/>
    <property type="evidence" value="ECO:0000318"/>
    <property type="project" value="GO_Central"/>
</dbReference>
<dbReference type="GO" id="GO:0005992">
    <property type="term" value="P:trehalose biosynthetic process"/>
    <property type="evidence" value="ECO:0000314"/>
    <property type="project" value="SGD"/>
</dbReference>
<dbReference type="CDD" id="cd03788">
    <property type="entry name" value="GT20_TPS"/>
    <property type="match status" value="1"/>
</dbReference>
<dbReference type="FunFam" id="3.40.50.2000:FF:000007">
    <property type="entry name" value="Trehalose-6-phosphate synthase"/>
    <property type="match status" value="1"/>
</dbReference>
<dbReference type="FunFam" id="3.40.50.2000:FF:000035">
    <property type="entry name" value="Trehalose-6-phosphate synthase"/>
    <property type="match status" value="1"/>
</dbReference>
<dbReference type="Gene3D" id="3.40.50.2000">
    <property type="entry name" value="Glycogen Phosphorylase B"/>
    <property type="match status" value="2"/>
</dbReference>
<dbReference type="InterPro" id="IPR001830">
    <property type="entry name" value="Glyco_trans_20"/>
</dbReference>
<dbReference type="InterPro" id="IPR012766">
    <property type="entry name" value="Trehalose_OtsA"/>
</dbReference>
<dbReference type="NCBIfam" id="TIGR02400">
    <property type="entry name" value="trehalose_OtsA"/>
    <property type="match status" value="1"/>
</dbReference>
<dbReference type="PANTHER" id="PTHR10788:SF106">
    <property type="entry name" value="BCDNA.GH08860"/>
    <property type="match status" value="1"/>
</dbReference>
<dbReference type="PANTHER" id="PTHR10788">
    <property type="entry name" value="TREHALOSE-6-PHOSPHATE SYNTHASE"/>
    <property type="match status" value="1"/>
</dbReference>
<dbReference type="Pfam" id="PF00982">
    <property type="entry name" value="Glyco_transf_20"/>
    <property type="match status" value="1"/>
</dbReference>
<dbReference type="SUPFAM" id="SSF53756">
    <property type="entry name" value="UDP-Glycosyltransferase/glycogen phosphorylase"/>
    <property type="match status" value="1"/>
</dbReference>
<keyword id="KW-0963">Cytoplasm</keyword>
<keyword id="KW-0903">Direct protein sequencing</keyword>
<keyword id="KW-0328">Glycosyltransferase</keyword>
<keyword id="KW-1185">Reference proteome</keyword>
<keyword id="KW-0346">Stress response</keyword>
<keyword id="KW-0808">Transferase</keyword>
<comment type="function">
    <text evidence="4 7">Synthase catalytic subunit of the trehalose synthase complex that catalyzes the production of trehalose from glucose-6-phosphate and UDP-alpha-D-glucose in a two step process. Can function independently of the complex.</text>
</comment>
<comment type="catalytic activity">
    <reaction evidence="4">
        <text>D-glucose 6-phosphate + UDP-alpha-D-glucose = alpha,alpha-trehalose 6-phosphate + UDP + H(+)</text>
        <dbReference type="Rhea" id="RHEA:18889"/>
        <dbReference type="ChEBI" id="CHEBI:15378"/>
        <dbReference type="ChEBI" id="CHEBI:58223"/>
        <dbReference type="ChEBI" id="CHEBI:58429"/>
        <dbReference type="ChEBI" id="CHEBI:58885"/>
        <dbReference type="ChEBI" id="CHEBI:61548"/>
        <dbReference type="EC" id="2.4.1.15"/>
    </reaction>
</comment>
<comment type="activity regulation">
    <text evidence="6">Activated by fructose 6-phosphate. Inorganic phosphate inhibits the synthase activity in the complex, but activates the synthase activity in the free monomeric form.</text>
</comment>
<comment type="biophysicochemical properties">
    <kinetics>
        <KM evidence="4">3.5 mM for D-glucose 6-phosphate</KM>
        <KM evidence="4">0.5 mM for UDP-alpha-D-glucose</KM>
    </kinetics>
</comment>
<comment type="pathway">
    <text evidence="10">Carbohydrate biosynthesis.</text>
</comment>
<comment type="subunit">
    <text evidence="8">The trehalose synthase complex is composed of the two catalytic subunits TPS1 and TPS2 and at least one of the two regulatory subunits TPS3 or TSL1.</text>
</comment>
<comment type="interaction">
    <interactant intactId="EBI-19430">
        <id>Q00764</id>
    </interactant>
    <interactant intactId="EBI-19440">
        <id>P31688</id>
        <label>TPS2</label>
    </interactant>
    <organismsDiffer>false</organismsDiffer>
    <experiments>8</experiments>
</comment>
<comment type="interaction">
    <interactant intactId="EBI-19430">
        <id>Q00764</id>
    </interactant>
    <interactant intactId="EBI-19448">
        <id>P38426</id>
        <label>TPS3</label>
    </interactant>
    <organismsDiffer>false</organismsDiffer>
    <experiments>6</experiments>
</comment>
<comment type="interaction">
    <interactant intactId="EBI-19430">
        <id>Q00764</id>
    </interactant>
    <interactant intactId="EBI-19638">
        <id>P38427</id>
        <label>TSL1</label>
    </interactant>
    <organismsDiffer>false</organismsDiffer>
    <experiments>7</experiments>
</comment>
<comment type="subcellular location">
    <subcellularLocation>
        <location evidence="2">Cytoplasm</location>
    </subcellularLocation>
</comment>
<comment type="induction">
    <text>Either partial repression by glucose or induction by galactose. Induced by heat shock.</text>
</comment>
<comment type="miscellaneous">
    <text evidence="3">Present with 10900 molecules/cell in log phase SD medium.</text>
</comment>
<comment type="similarity">
    <text evidence="10">Belongs to the glycosyltransferase 20 family.</text>
</comment>
<comment type="sequence caution" evidence="10">
    <conflict type="frameshift">
        <sequence resource="EMBL-CDS" id="AAA66891"/>
    </conflict>
</comment>
<gene>
    <name evidence="9" type="primary">TPS1</name>
    <name type="synonym">BYP1</name>
    <name type="synonym">CIF1</name>
    <name type="synonym">FDP1</name>
    <name type="synonym">GGS1</name>
    <name type="synonym">GLC6</name>
    <name type="synonym">TSS1</name>
    <name type="ordered locus">YBR126C</name>
    <name type="ORF">YBR0922</name>
</gene>
<reference key="1">
    <citation type="journal article" date="1989" name="J. Biol. Chem.">
        <title>A conserved gene encoding the 57-kDa subunit of the yeast vacuolar H+-ATPase.</title>
        <authorList>
            <person name="Nelson H."/>
            <person name="Mandiyan S."/>
            <person name="Nelson N."/>
        </authorList>
    </citation>
    <scope>NUCLEOTIDE SEQUENCE [GENOMIC DNA]</scope>
</reference>
<reference key="2">
    <citation type="journal article" date="1992" name="Eur. J. Biochem.">
        <title>Characterization of the 56-kDa subunit of yeast trehalose-6-phosphate synthase and cloning of its gene reveal its identity with the product of CIF1, a regulator of carbon catabolite inactivation.</title>
        <authorList>
            <person name="Bell W."/>
            <person name="Klaassen P."/>
            <person name="Ohnacker M."/>
            <person name="Boller T."/>
            <person name="Herweijer M."/>
            <person name="Schoppink P."/>
            <person name="van der Zee P."/>
            <person name="Wiemken A."/>
        </authorList>
    </citation>
    <scope>NUCLEOTIDE SEQUENCE [GENOMIC DNA]</scope>
    <source>
        <strain>C13-ABYS86</strain>
    </source>
</reference>
<reference key="3">
    <citation type="journal article" date="1993" name="FEMS Microbiol. Lett.">
        <title>A yeast gene for trehalose-6-phosphate synthase and its complementation of an Escherichia coli otsA mutant.</title>
        <authorList>
            <person name="McDougall J."/>
            <person name="Kaasen I."/>
            <person name="Stroem A.R."/>
        </authorList>
    </citation>
    <scope>NUCLEOTIDE SEQUENCE [GENOMIC DNA]</scope>
</reference>
<reference key="4">
    <citation type="journal article" date="1992" name="Yeast">
        <title>Molecular cloning of CIF1, a yeast gene necessary for growth on glucose.</title>
        <authorList>
            <person name="Gonzales M.I."/>
            <person name="Stucka R."/>
            <person name="Blazquez M.A."/>
            <person name="Feldmann H."/>
            <person name="Gancedo C."/>
        </authorList>
    </citation>
    <scope>NUCLEOTIDE SEQUENCE [GENOMIC DNA]</scope>
    <source>
        <strain>C836</strain>
    </source>
</reference>
<reference key="5">
    <citation type="journal article" date="1993" name="Mol. Microbiol.">
        <title>Molecular cloning of a gene involved in glucose sensing in the yeast Saccharomyces cerevisiae.</title>
        <authorList>
            <person name="van Aelst L."/>
            <person name="Hohmann S."/>
            <person name="Bulaya B."/>
            <person name="de Koning W."/>
            <person name="Sierkstra L."/>
            <person name="Neves M.J."/>
            <person name="Luyten K."/>
            <person name="Alijo R."/>
            <person name="Ramos J."/>
            <person name="Coccetti P."/>
            <person name="Martegani E."/>
            <person name="de Magalhaes-Rocha N.M."/>
            <person name="Brandao R.L."/>
            <person name="van Dijck P."/>
            <person name="Vanhalewyn M."/>
            <person name="Durnez P."/>
            <person name="Jans A.W.H."/>
            <person name="Thevelein J.M."/>
        </authorList>
    </citation>
    <scope>NUCLEOTIDE SEQUENCE [GENOMIC DNA]</scope>
</reference>
<reference key="6">
    <citation type="journal article" date="1994" name="Genetics">
        <title>Characterization of glycogen-deficient glc mutants of Saccharomyces cerevisiae.</title>
        <authorList>
            <person name="Cannon J.F."/>
            <person name="Pringle J.R."/>
            <person name="Fiechter A."/>
            <person name="Khalil M."/>
        </authorList>
    </citation>
    <scope>NUCLEOTIDE SEQUENCE [GENOMIC DNA]</scope>
    <scope>MUTAGENESIS OF HIS-223</scope>
</reference>
<reference key="7">
    <citation type="journal article" date="1993" name="Eur. J. Biochem.">
        <title>Cloning of two related genes encoding the 56-kDa and 123-kDa subunits of trehalose synthase from the yeast Saccharomyces cerevisiae.</title>
        <authorList>
            <person name="Vuorio O.E."/>
            <person name="Kalkkinen N."/>
            <person name="Londesborough J."/>
        </authorList>
    </citation>
    <scope>NUCLEOTIDE SEQUENCE [GENOMIC DNA]</scope>
    <scope>PARTIAL PROTEIN SEQUENCE</scope>
    <source>
        <strain>ATCC 204508 / S288c</strain>
    </source>
</reference>
<reference key="8">
    <citation type="journal article" date="2000" name="Sheng Wu Gong Cheng Xue Bao">
        <title>cDNA cloning, sequence analysis of trehalose-6-phosphate synthase gene from Saccharomyces cerevisiae AS2.1416.</title>
        <authorList>
            <person name="Dong Z.Y."/>
            <person name="Duan Y.K."/>
            <person name="Chen H.M."/>
            <person name="Jin C."/>
            <person name="Zhang S.Z."/>
        </authorList>
    </citation>
    <scope>NUCLEOTIDE SEQUENCE [MRNA]</scope>
    <source>
        <strain>AS2.1416</strain>
    </source>
</reference>
<reference key="9">
    <citation type="submission" date="2004-05" db="EMBL/GenBank/DDBJ databases">
        <title>Research on the mechanism of osmotolerance and thermotolerance of yeast.</title>
        <authorList>
            <person name="Ma X."/>
            <person name="Guo Y."/>
            <person name="Zhang F."/>
            <person name="Yu H."/>
            <person name="Kuang J."/>
            <person name="Yao J."/>
            <person name="Li Z."/>
            <person name="He G."/>
        </authorList>
    </citation>
    <scope>NUCLEOTIDE SEQUENCE [GENOMIC DNA]</scope>
    <source>
        <strain>FHS</strain>
        <strain>WFB</strain>
    </source>
</reference>
<reference key="10">
    <citation type="journal article" date="1994" name="Yeast">
        <title>The sequence of 29.7 kb from the right arm of chromosome II reveals 13 complete open reading frames, of which ten correspond to new genes.</title>
        <authorList>
            <person name="Becam A.-M."/>
            <person name="Cullin C."/>
            <person name="Grzybowska E."/>
            <person name="Lacroute F."/>
            <person name="Nasr F."/>
            <person name="Ozier-Kalogeropoulos O."/>
            <person name="Palucha A."/>
            <person name="Slonimski P.P."/>
            <person name="Zagulski M."/>
            <person name="Herbert C.J."/>
        </authorList>
    </citation>
    <scope>NUCLEOTIDE SEQUENCE [GENOMIC DNA]</scope>
    <source>
        <strain>ATCC 204508 / S288c</strain>
    </source>
</reference>
<reference key="11">
    <citation type="journal article" date="1994" name="EMBO J.">
        <title>Complete DNA sequence of yeast chromosome II.</title>
        <authorList>
            <person name="Feldmann H."/>
            <person name="Aigle M."/>
            <person name="Aljinovic G."/>
            <person name="Andre B."/>
            <person name="Baclet M.C."/>
            <person name="Barthe C."/>
            <person name="Baur A."/>
            <person name="Becam A.-M."/>
            <person name="Biteau N."/>
            <person name="Boles E."/>
            <person name="Brandt T."/>
            <person name="Brendel M."/>
            <person name="Brueckner M."/>
            <person name="Bussereau F."/>
            <person name="Christiansen C."/>
            <person name="Contreras R."/>
            <person name="Crouzet M."/>
            <person name="Cziepluch C."/>
            <person name="Demolis N."/>
            <person name="Delaveau T."/>
            <person name="Doignon F."/>
            <person name="Domdey H."/>
            <person name="Duesterhus S."/>
            <person name="Dubois E."/>
            <person name="Dujon B."/>
            <person name="El Bakkoury M."/>
            <person name="Entian K.-D."/>
            <person name="Feuermann M."/>
            <person name="Fiers W."/>
            <person name="Fobo G.M."/>
            <person name="Fritz C."/>
            <person name="Gassenhuber J."/>
            <person name="Glansdorff N."/>
            <person name="Goffeau A."/>
            <person name="Grivell L.A."/>
            <person name="de Haan M."/>
            <person name="Hein C."/>
            <person name="Herbert C.J."/>
            <person name="Hollenberg C.P."/>
            <person name="Holmstroem K."/>
            <person name="Jacq C."/>
            <person name="Jacquet M."/>
            <person name="Jauniaux J.-C."/>
            <person name="Jonniaux J.-L."/>
            <person name="Kallesoee T."/>
            <person name="Kiesau P."/>
            <person name="Kirchrath L."/>
            <person name="Koetter P."/>
            <person name="Korol S."/>
            <person name="Liebl S."/>
            <person name="Logghe M."/>
            <person name="Lohan A.J.E."/>
            <person name="Louis E.J."/>
            <person name="Li Z.Y."/>
            <person name="Maat M.J."/>
            <person name="Mallet L."/>
            <person name="Mannhaupt G."/>
            <person name="Messenguy F."/>
            <person name="Miosga T."/>
            <person name="Molemans F."/>
            <person name="Mueller S."/>
            <person name="Nasr F."/>
            <person name="Obermaier B."/>
            <person name="Perea J."/>
            <person name="Pierard A."/>
            <person name="Piravandi E."/>
            <person name="Pohl F.M."/>
            <person name="Pohl T.M."/>
            <person name="Potier S."/>
            <person name="Proft M."/>
            <person name="Purnelle B."/>
            <person name="Ramezani Rad M."/>
            <person name="Rieger M."/>
            <person name="Rose M."/>
            <person name="Schaaff-Gerstenschlaeger I."/>
            <person name="Scherens B."/>
            <person name="Schwarzlose C."/>
            <person name="Skala J."/>
            <person name="Slonimski P.P."/>
            <person name="Smits P.H.M."/>
            <person name="Souciet J.-L."/>
            <person name="Steensma H.Y."/>
            <person name="Stucka R."/>
            <person name="Urrestarazu L.A."/>
            <person name="van der Aart Q.J.M."/>
            <person name="Van Dyck L."/>
            <person name="Vassarotti A."/>
            <person name="Vetter I."/>
            <person name="Vierendeels F."/>
            <person name="Vissers S."/>
            <person name="Wagner G."/>
            <person name="de Wergifosse P."/>
            <person name="Wolfe K.H."/>
            <person name="Zagulski M."/>
            <person name="Zimmermann F.K."/>
            <person name="Mewes H.-W."/>
            <person name="Kleine K."/>
        </authorList>
    </citation>
    <scope>NUCLEOTIDE SEQUENCE [LARGE SCALE GENOMIC DNA]</scope>
    <source>
        <strain>ATCC 204508 / S288c</strain>
    </source>
</reference>
<reference key="12">
    <citation type="journal article" date="2014" name="G3 (Bethesda)">
        <title>The reference genome sequence of Saccharomyces cerevisiae: Then and now.</title>
        <authorList>
            <person name="Engel S.R."/>
            <person name="Dietrich F.S."/>
            <person name="Fisk D.G."/>
            <person name="Binkley G."/>
            <person name="Balakrishnan R."/>
            <person name="Costanzo M.C."/>
            <person name="Dwight S.S."/>
            <person name="Hitz B.C."/>
            <person name="Karra K."/>
            <person name="Nash R.S."/>
            <person name="Weng S."/>
            <person name="Wong E.D."/>
            <person name="Lloyd P."/>
            <person name="Skrzypek M.S."/>
            <person name="Miyasato S.R."/>
            <person name="Simison M."/>
            <person name="Cherry J.M."/>
        </authorList>
    </citation>
    <scope>GENOME REANNOTATION</scope>
    <source>
        <strain>ATCC 204508 / S288c</strain>
    </source>
</reference>
<reference key="13">
    <citation type="journal article" date="2007" name="Genome Res.">
        <title>Approaching a complete repository of sequence-verified protein-encoding clones for Saccharomyces cerevisiae.</title>
        <authorList>
            <person name="Hu Y."/>
            <person name="Rolfs A."/>
            <person name="Bhullar B."/>
            <person name="Murthy T.V.S."/>
            <person name="Zhu C."/>
            <person name="Berger M.F."/>
            <person name="Camargo A.A."/>
            <person name="Kelley F."/>
            <person name="McCarron S."/>
            <person name="Jepson D."/>
            <person name="Richardson A."/>
            <person name="Raphael J."/>
            <person name="Moreira D."/>
            <person name="Taycher E."/>
            <person name="Zuo D."/>
            <person name="Mohr S."/>
            <person name="Kane M.F."/>
            <person name="Williamson J."/>
            <person name="Simpson A.J.G."/>
            <person name="Bulyk M.L."/>
            <person name="Harlow E."/>
            <person name="Marsischky G."/>
            <person name="Kolodner R.D."/>
            <person name="LaBaer J."/>
        </authorList>
    </citation>
    <scope>NUCLEOTIDE SEQUENCE [GENOMIC DNA]</scope>
    <source>
        <strain>ATCC 204508 / S288c</strain>
    </source>
</reference>
<reference key="14">
    <citation type="journal article" date="1994" name="Yeast">
        <title>Analysis of a 70 kb region on the right arm of yeast chromosome II.</title>
        <authorList>
            <person name="Mannhaupt G."/>
            <person name="Stucka R."/>
            <person name="Ehnle S."/>
            <person name="Vetter I."/>
            <person name="Feldmann H."/>
        </authorList>
    </citation>
    <scope>NUCLEOTIDE SEQUENCE [GENOMIC DNA] OF 291-495</scope>
    <source>
        <strain>ATCC 204508 / S288c</strain>
    </source>
</reference>
<reference key="15">
    <citation type="journal article" date="1989" name="Eur. J. Biochem.">
        <title>Characterization of trehalose-6-phosphate synthase and trehalose-6-phosphate phosphatase of Saccharomyces cerevisiae.</title>
        <authorList>
            <person name="Vandercammen A."/>
            <person name="Francois J."/>
            <person name="Hers H.-G."/>
        </authorList>
    </citation>
    <scope>FUNCTION</scope>
    <scope>CATALYTIC ACTIVITY</scope>
    <scope>BIOPHYSICOCHEMICAL PROPERTIES</scope>
</reference>
<reference key="16">
    <citation type="journal article" date="1993" name="Eur. J. Biochem.">
        <title>Purification of trehalose synthase from baker's yeast. Its temperature-dependent activation by fructose 6-phosphate and inhibition by phosphate.</title>
        <authorList>
            <person name="Londesborough J."/>
            <person name="Vuorio O.E."/>
        </authorList>
    </citation>
    <scope>ACTIVITY REGULATION</scope>
</reference>
<reference key="17">
    <citation type="journal article" date="1997" name="Mol. Microbiol.">
        <title>Structural analysis of the subunits of the trehalose-6-phosphate synthase/phosphatase complex in Saccharomyces cerevisiae and their function during heat shock.</title>
        <authorList>
            <person name="Reinders A."/>
            <person name="Buerckert N."/>
            <person name="Hohmann S."/>
            <person name="Thevelein J.M."/>
            <person name="Boller T."/>
            <person name="Wiemken A."/>
            <person name="De Virgilio C."/>
        </authorList>
    </citation>
    <scope>FUNCTION</scope>
    <scope>INTERACTION WITH TPS2; TPS3 AND TSL1</scope>
</reference>
<reference key="18">
    <citation type="journal article" date="1998" name="J. Biol. Chem.">
        <title>Composition and functional analysis of the Saccharomyces cerevisiae trehalose synthase complex.</title>
        <authorList>
            <person name="Bell W."/>
            <person name="Sun W."/>
            <person name="Hohmann S."/>
            <person name="Wera S."/>
            <person name="Reinders A."/>
            <person name="De Virgilio C."/>
            <person name="Wiemken A."/>
            <person name="Thevelein J.M."/>
        </authorList>
    </citation>
    <scope>SUBUNIT</scope>
</reference>
<reference key="19">
    <citation type="journal article" date="2003" name="Nature">
        <title>Global analysis of protein localization in budding yeast.</title>
        <authorList>
            <person name="Huh W.-K."/>
            <person name="Falvo J.V."/>
            <person name="Gerke L.C."/>
            <person name="Carroll A.S."/>
            <person name="Howson R.W."/>
            <person name="Weissman J.S."/>
            <person name="O'Shea E.K."/>
        </authorList>
    </citation>
    <scope>SUBCELLULAR LOCATION [LARGE SCALE ANALYSIS]</scope>
</reference>
<reference key="20">
    <citation type="journal article" date="2003" name="Nature">
        <title>Global analysis of protein expression in yeast.</title>
        <authorList>
            <person name="Ghaemmaghami S."/>
            <person name="Huh W.-K."/>
            <person name="Bower K."/>
            <person name="Howson R.W."/>
            <person name="Belle A."/>
            <person name="Dephoure N."/>
            <person name="O'Shea E.K."/>
            <person name="Weissman J.S."/>
        </authorList>
    </citation>
    <scope>LEVEL OF PROTEIN EXPRESSION [LARGE SCALE ANALYSIS]</scope>
</reference>
<reference key="21">
    <citation type="journal article" date="2012" name="Proc. Natl. Acad. Sci. U.S.A.">
        <title>N-terminal acetylome analyses and functional insights of the N-terminal acetyltransferase NatB.</title>
        <authorList>
            <person name="Van Damme P."/>
            <person name="Lasa M."/>
            <person name="Polevoda B."/>
            <person name="Gazquez C."/>
            <person name="Elosegui-Artola A."/>
            <person name="Kim D.S."/>
            <person name="De Juan-Pardo E."/>
            <person name="Demeyer K."/>
            <person name="Hole K."/>
            <person name="Larrea E."/>
            <person name="Timmerman E."/>
            <person name="Prieto J."/>
            <person name="Arnesen T."/>
            <person name="Sherman F."/>
            <person name="Gevaert K."/>
            <person name="Aldabe R."/>
        </authorList>
    </citation>
    <scope>IDENTIFICATION BY MASS SPECTROMETRY [LARGE SCALE ANALYSIS]</scope>
</reference>
<proteinExistence type="evidence at protein level"/>
<feature type="chain" id="PRO_0000122502" description="Alpha,alpha-trehalose-phosphate synthase [UDP-forming] 56 kDa subunit">
    <location>
        <begin position="1"/>
        <end position="495"/>
    </location>
</feature>
<feature type="binding site" evidence="1">
    <location>
        <position position="102"/>
    </location>
    <ligand>
        <name>D-glucose 6-phosphate</name>
        <dbReference type="ChEBI" id="CHEBI:61548"/>
    </ligand>
</feature>
<feature type="binding site" evidence="1">
    <location>
        <position position="156"/>
    </location>
    <ligand>
        <name>D-glucose 6-phosphate</name>
        <dbReference type="ChEBI" id="CHEBI:61548"/>
    </ligand>
</feature>
<feature type="binding site" evidence="1">
    <location>
        <position position="293"/>
    </location>
    <ligand>
        <name>UDP</name>
        <dbReference type="ChEBI" id="CHEBI:58223"/>
    </ligand>
</feature>
<feature type="binding site" evidence="1">
    <location>
        <position position="293"/>
    </location>
    <ligand>
        <name>UDP-alpha-D-glucose</name>
        <dbReference type="ChEBI" id="CHEBI:58885"/>
    </ligand>
</feature>
<feature type="binding site" evidence="1">
    <location>
        <position position="298"/>
    </location>
    <ligand>
        <name>UDP</name>
        <dbReference type="ChEBI" id="CHEBI:58223"/>
    </ligand>
</feature>
<feature type="binding site" evidence="1">
    <location>
        <position position="298"/>
    </location>
    <ligand>
        <name>UDP-alpha-D-glucose</name>
        <dbReference type="ChEBI" id="CHEBI:58885"/>
    </ligand>
</feature>
<feature type="binding site" evidence="1">
    <location>
        <position position="331"/>
    </location>
    <ligand>
        <name>D-glucose 6-phosphate</name>
        <dbReference type="ChEBI" id="CHEBI:61548"/>
    </ligand>
</feature>
<feature type="binding site" evidence="1">
    <location>
        <position position="370"/>
    </location>
    <ligand>
        <name>UDP</name>
        <dbReference type="ChEBI" id="CHEBI:58223"/>
    </ligand>
</feature>
<feature type="binding site" evidence="1">
    <location>
        <position position="370"/>
    </location>
    <ligand>
        <name>UDP-alpha-D-glucose</name>
        <dbReference type="ChEBI" id="CHEBI:58885"/>
    </ligand>
</feature>
<feature type="binding site" evidence="1">
    <location>
        <begin position="392"/>
        <end position="400"/>
    </location>
    <ligand>
        <name>UDP-alpha-D-glucose</name>
        <dbReference type="ChEBI" id="CHEBI:58885"/>
    </ligand>
</feature>
<feature type="binding site" evidence="1">
    <location>
        <begin position="396"/>
        <end position="400"/>
    </location>
    <ligand>
        <name>UDP</name>
        <dbReference type="ChEBI" id="CHEBI:58223"/>
    </ligand>
</feature>
<feature type="mutagenesis site" description="In GLC6-1; low glycogen accumulation." evidence="5">
    <original>H</original>
    <variation>Y</variation>
    <location>
        <position position="223"/>
    </location>
</feature>
<feature type="sequence conflict" description="In Ref. 2; CAA48296." evidence="10" ref="2">
    <original>K</original>
    <variation>M</variation>
    <location>
        <position position="75"/>
    </location>
</feature>
<feature type="sequence conflict" description="In Ref. 2; CAA48296." evidence="10" ref="2">
    <original>H</original>
    <variation>L</variation>
    <location>
        <position position="101"/>
    </location>
</feature>
<feature type="sequence conflict" description="In Ref. 2; CAA48296." evidence="10" ref="2">
    <original>G</original>
    <variation>W</variation>
    <location>
        <position position="104"/>
    </location>
</feature>
<feature type="sequence conflict" description="In Ref. 4; CAA43580." evidence="10" ref="4">
    <original>LA</original>
    <variation>FG</variation>
    <location>
        <begin position="129"/>
        <end position="130"/>
    </location>
</feature>
<feature type="sequence conflict" description="In Ref. 2; CAA48296." evidence="10" ref="2">
    <original>T</original>
    <variation>S</variation>
    <location>
        <position position="217"/>
    </location>
</feature>
<feature type="sequence conflict" description="In Ref. 2; CAA48296." evidence="10" ref="2">
    <original>I</original>
    <variation>L</variation>
    <location>
        <position position="288"/>
    </location>
</feature>
<protein>
    <recommendedName>
        <fullName>Alpha,alpha-trehalose-phosphate synthase [UDP-forming] 56 kDa subunit</fullName>
        <ecNumber evidence="4">2.4.1.15</ecNumber>
    </recommendedName>
    <alternativeName>
        <fullName>General glucose sensor subunit 1</fullName>
    </alternativeName>
    <alternativeName>
        <fullName>Glycogen metabolism control protein GLC6</fullName>
    </alternativeName>
    <alternativeName>
        <fullName>Trehalose synthase complex catalytic subunit TPS1</fullName>
    </alternativeName>
    <alternativeName>
        <fullName>Trehalose-6-phosphate synthase</fullName>
    </alternativeName>
    <alternativeName>
        <fullName>UDP-glucose-glucosephosphate glucosyltransferase</fullName>
    </alternativeName>
</protein>
<evidence type="ECO:0000250" key="1">
    <source>
        <dbReference type="UniProtKB" id="Q92410"/>
    </source>
</evidence>
<evidence type="ECO:0000269" key="2">
    <source>
    </source>
</evidence>
<evidence type="ECO:0000269" key="3">
    <source>
    </source>
</evidence>
<evidence type="ECO:0000269" key="4">
    <source>
    </source>
</evidence>
<evidence type="ECO:0000269" key="5">
    <source>
    </source>
</evidence>
<evidence type="ECO:0000269" key="6">
    <source>
    </source>
</evidence>
<evidence type="ECO:0000269" key="7">
    <source>
    </source>
</evidence>
<evidence type="ECO:0000269" key="8">
    <source>
    </source>
</evidence>
<evidence type="ECO:0000303" key="9">
    <source>
    </source>
</evidence>
<evidence type="ECO:0000305" key="10"/>
<name>TPS1_YEAST</name>
<accession>Q00764</accession>
<accession>D6VQC3</accession>
<accession>Q01801</accession>
<accession>Q05168</accession>
<accession>Q6J5J4</accession>
<organism>
    <name type="scientific">Saccharomyces cerevisiae (strain ATCC 204508 / S288c)</name>
    <name type="common">Baker's yeast</name>
    <dbReference type="NCBI Taxonomy" id="559292"/>
    <lineage>
        <taxon>Eukaryota</taxon>
        <taxon>Fungi</taxon>
        <taxon>Dikarya</taxon>
        <taxon>Ascomycota</taxon>
        <taxon>Saccharomycotina</taxon>
        <taxon>Saccharomycetes</taxon>
        <taxon>Saccharomycetales</taxon>
        <taxon>Saccharomycetaceae</taxon>
        <taxon>Saccharomyces</taxon>
    </lineage>
</organism>
<sequence length="495" mass="56148">MTTDNAKAQLTSSSGGNIIVVSNRLPVTITKNSSTGQYEYAMSSGGLVTALEGLKKTYTFKWFGWPGLEIPDDEKDQVRKDLLEKFNAVPIFLSDEIADLHYNGFSNSILWPLFHYHPGEINFDENAWLAYNEANQTFTNEIAKTMNHNDLIWVHDYHLMLVPEMLRVKIHEKQLQNVKVGWFLHTPFPSSEIYRILPVRQEILKGVLSCDLVGFHTYDYARHFLSSVQRVLNVNTLPNGVEYQGRFVNVGAFPIGIDVDKFTDGLKKESVQKRIQQLKETFKGCKIIVGVDRLDYIKGVPQKLHAMEVFLNEHPEWRGKVVLVQVAVPSRGDVEEYQYLRSVVNELVGRINGQFGTVEFVPIHFMHKSIPFEELISLYAVSDVCLVSSTRDGMNLVSYEYIACQEEKKGSLILSEFTGAAQSLNGAIIVNPWNTDDLSDAINEALTLPDVKKEVNWEKLYKYISKYTSAFWGENFVHELYSTSSSSTSSSATKN</sequence>